<proteinExistence type="inferred from homology"/>
<name>HIS2_TRIL1</name>
<accession>B3E616</accession>
<feature type="chain" id="PRO_1000135309" description="Phosphoribosyl-ATP pyrophosphatase">
    <location>
        <begin position="1"/>
        <end position="108"/>
    </location>
</feature>
<organism>
    <name type="scientific">Trichlorobacter lovleyi (strain ATCC BAA-1151 / DSM 17278 / SZ)</name>
    <name type="common">Geobacter lovleyi</name>
    <dbReference type="NCBI Taxonomy" id="398767"/>
    <lineage>
        <taxon>Bacteria</taxon>
        <taxon>Pseudomonadati</taxon>
        <taxon>Thermodesulfobacteriota</taxon>
        <taxon>Desulfuromonadia</taxon>
        <taxon>Geobacterales</taxon>
        <taxon>Geobacteraceae</taxon>
        <taxon>Trichlorobacter</taxon>
    </lineage>
</organism>
<reference key="1">
    <citation type="submission" date="2008-05" db="EMBL/GenBank/DDBJ databases">
        <title>Complete sequence of chromosome of Geobacter lovleyi SZ.</title>
        <authorList>
            <consortium name="US DOE Joint Genome Institute"/>
            <person name="Lucas S."/>
            <person name="Copeland A."/>
            <person name="Lapidus A."/>
            <person name="Glavina del Rio T."/>
            <person name="Dalin E."/>
            <person name="Tice H."/>
            <person name="Bruce D."/>
            <person name="Goodwin L."/>
            <person name="Pitluck S."/>
            <person name="Chertkov O."/>
            <person name="Meincke L."/>
            <person name="Brettin T."/>
            <person name="Detter J.C."/>
            <person name="Han C."/>
            <person name="Tapia R."/>
            <person name="Kuske C.R."/>
            <person name="Schmutz J."/>
            <person name="Larimer F."/>
            <person name="Land M."/>
            <person name="Hauser L."/>
            <person name="Kyrpides N."/>
            <person name="Mikhailova N."/>
            <person name="Sung Y."/>
            <person name="Fletcher K.E."/>
            <person name="Ritalahti K.M."/>
            <person name="Loeffler F.E."/>
            <person name="Richardson P."/>
        </authorList>
    </citation>
    <scope>NUCLEOTIDE SEQUENCE [LARGE SCALE GENOMIC DNA]</scope>
    <source>
        <strain>ATCC BAA-1151 / DSM 17278 / SZ</strain>
    </source>
</reference>
<comment type="catalytic activity">
    <reaction evidence="1">
        <text>1-(5-phospho-beta-D-ribosyl)-ATP + H2O = 1-(5-phospho-beta-D-ribosyl)-5'-AMP + diphosphate + H(+)</text>
        <dbReference type="Rhea" id="RHEA:22828"/>
        <dbReference type="ChEBI" id="CHEBI:15377"/>
        <dbReference type="ChEBI" id="CHEBI:15378"/>
        <dbReference type="ChEBI" id="CHEBI:33019"/>
        <dbReference type="ChEBI" id="CHEBI:59457"/>
        <dbReference type="ChEBI" id="CHEBI:73183"/>
        <dbReference type="EC" id="3.6.1.31"/>
    </reaction>
</comment>
<comment type="pathway">
    <text evidence="1">Amino-acid biosynthesis; L-histidine biosynthesis; L-histidine from 5-phospho-alpha-D-ribose 1-diphosphate: step 2/9.</text>
</comment>
<comment type="subcellular location">
    <subcellularLocation>
        <location evidence="1">Cytoplasm</location>
    </subcellularLocation>
</comment>
<comment type="similarity">
    <text evidence="1">Belongs to the PRA-PH family.</text>
</comment>
<evidence type="ECO:0000255" key="1">
    <source>
        <dbReference type="HAMAP-Rule" id="MF_01020"/>
    </source>
</evidence>
<protein>
    <recommendedName>
        <fullName evidence="1">Phosphoribosyl-ATP pyrophosphatase</fullName>
        <shortName evidence="1">PRA-PH</shortName>
        <ecNumber evidence="1">3.6.1.31</ecNumber>
    </recommendedName>
</protein>
<gene>
    <name evidence="1" type="primary">hisE</name>
    <name type="ordered locus">Glov_1017</name>
</gene>
<keyword id="KW-0028">Amino-acid biosynthesis</keyword>
<keyword id="KW-0067">ATP-binding</keyword>
<keyword id="KW-0963">Cytoplasm</keyword>
<keyword id="KW-0368">Histidine biosynthesis</keyword>
<keyword id="KW-0378">Hydrolase</keyword>
<keyword id="KW-0547">Nucleotide-binding</keyword>
<keyword id="KW-1185">Reference proteome</keyword>
<dbReference type="EC" id="3.6.1.31" evidence="1"/>
<dbReference type="EMBL" id="CP001089">
    <property type="protein sequence ID" value="ACD94740.1"/>
    <property type="molecule type" value="Genomic_DNA"/>
</dbReference>
<dbReference type="RefSeq" id="WP_012469090.1">
    <property type="nucleotide sequence ID" value="NC_010814.1"/>
</dbReference>
<dbReference type="SMR" id="B3E616"/>
<dbReference type="STRING" id="398767.Glov_1017"/>
<dbReference type="KEGG" id="glo:Glov_1017"/>
<dbReference type="eggNOG" id="COG0140">
    <property type="taxonomic scope" value="Bacteria"/>
</dbReference>
<dbReference type="HOGENOM" id="CLU_123337_1_2_7"/>
<dbReference type="OrthoDB" id="9795769at2"/>
<dbReference type="UniPathway" id="UPA00031">
    <property type="reaction ID" value="UER00007"/>
</dbReference>
<dbReference type="Proteomes" id="UP000002420">
    <property type="component" value="Chromosome"/>
</dbReference>
<dbReference type="GO" id="GO:0005737">
    <property type="term" value="C:cytoplasm"/>
    <property type="evidence" value="ECO:0007669"/>
    <property type="project" value="UniProtKB-SubCell"/>
</dbReference>
<dbReference type="GO" id="GO:0005524">
    <property type="term" value="F:ATP binding"/>
    <property type="evidence" value="ECO:0007669"/>
    <property type="project" value="UniProtKB-KW"/>
</dbReference>
<dbReference type="GO" id="GO:0004636">
    <property type="term" value="F:phosphoribosyl-ATP diphosphatase activity"/>
    <property type="evidence" value="ECO:0007669"/>
    <property type="project" value="UniProtKB-UniRule"/>
</dbReference>
<dbReference type="GO" id="GO:0000105">
    <property type="term" value="P:L-histidine biosynthetic process"/>
    <property type="evidence" value="ECO:0007669"/>
    <property type="project" value="UniProtKB-UniRule"/>
</dbReference>
<dbReference type="CDD" id="cd11534">
    <property type="entry name" value="NTP-PPase_HisIE_like"/>
    <property type="match status" value="1"/>
</dbReference>
<dbReference type="Gene3D" id="1.10.287.1080">
    <property type="entry name" value="MazG-like"/>
    <property type="match status" value="1"/>
</dbReference>
<dbReference type="HAMAP" id="MF_01020">
    <property type="entry name" value="HisE"/>
    <property type="match status" value="1"/>
</dbReference>
<dbReference type="InterPro" id="IPR008179">
    <property type="entry name" value="HisE"/>
</dbReference>
<dbReference type="InterPro" id="IPR021130">
    <property type="entry name" value="PRib-ATP_PPHydrolase-like"/>
</dbReference>
<dbReference type="NCBIfam" id="TIGR03188">
    <property type="entry name" value="histidine_hisI"/>
    <property type="match status" value="1"/>
</dbReference>
<dbReference type="NCBIfam" id="NF001611">
    <property type="entry name" value="PRK00400.1-3"/>
    <property type="match status" value="1"/>
</dbReference>
<dbReference type="NCBIfam" id="NF001613">
    <property type="entry name" value="PRK00400.1-5"/>
    <property type="match status" value="1"/>
</dbReference>
<dbReference type="PANTHER" id="PTHR42945">
    <property type="entry name" value="HISTIDINE BIOSYNTHESIS BIFUNCTIONAL PROTEIN"/>
    <property type="match status" value="1"/>
</dbReference>
<dbReference type="PANTHER" id="PTHR42945:SF9">
    <property type="entry name" value="HISTIDINE BIOSYNTHESIS BIFUNCTIONAL PROTEIN HISIE"/>
    <property type="match status" value="1"/>
</dbReference>
<dbReference type="Pfam" id="PF01503">
    <property type="entry name" value="PRA-PH"/>
    <property type="match status" value="1"/>
</dbReference>
<dbReference type="SUPFAM" id="SSF101386">
    <property type="entry name" value="all-alpha NTP pyrophosphatases"/>
    <property type="match status" value="1"/>
</dbReference>
<sequence length="108" mass="11782">MNSNQHILDELYQVILSRKGASPDSSYTASLLHKGVDKILKKVGEEATEVVIAGKGGTDTELIYETADLLYHGLVLLAARDIPADAVWSELQRRFGTSGIVEKAARKE</sequence>